<evidence type="ECO:0000250" key="1"/>
<evidence type="ECO:0000250" key="2">
    <source>
        <dbReference type="UniProtKB" id="G5BQH5"/>
    </source>
</evidence>
<evidence type="ECO:0000250" key="3">
    <source>
        <dbReference type="UniProtKB" id="P02647"/>
    </source>
</evidence>
<evidence type="ECO:0000250" key="4">
    <source>
        <dbReference type="UniProtKB" id="P02648"/>
    </source>
</evidence>
<evidence type="ECO:0000250" key="5">
    <source>
        <dbReference type="UniProtKB" id="P04639"/>
    </source>
</evidence>
<evidence type="ECO:0000255" key="6"/>
<evidence type="ECO:0000305" key="7"/>
<gene>
    <name type="primary">APOA1</name>
</gene>
<accession>A0A2K5EJU6</accession>
<comment type="function">
    <text evidence="3">Participates in the reverse transport of cholesterol from tissues to the liver for excretion by promoting cholesterol efflux from tissues and by acting as a cofactor for the lecithin cholesterol acyltransferase (LCAT). As part of the SPAP complex, activates spermatozoa motility.</text>
</comment>
<comment type="subunit">
    <text evidence="2 3 5">Homodimer (By similarity). Interacts with APOA1BP and CLU. Component of a sperm activating protein complex (SPAP), consisting of APOA1, an immunoglobulin heavy chain, an immunoglobulin light chain and albumin. Interacts with NDRG1. Interacts with SCGB3A2 (By similarity). Interacts with NAXE and YJEFN3 (By similarity).</text>
</comment>
<comment type="subcellular location">
    <subcellularLocation>
        <location evidence="3">Secreted</location>
    </subcellularLocation>
</comment>
<comment type="PTM">
    <text evidence="4">Glycosylated.</text>
</comment>
<comment type="PTM">
    <text evidence="4">Palmitoylated.</text>
</comment>
<comment type="PTM">
    <text evidence="1">Phosphorylation sites are present in the extracellular medium.</text>
</comment>
<comment type="similarity">
    <text evidence="7">Belongs to the apolipoprotein A1/A4/E family.</text>
</comment>
<dbReference type="RefSeq" id="XP_012325871.1">
    <property type="nucleotide sequence ID" value="XM_012470448.2"/>
</dbReference>
<dbReference type="RefSeq" id="XP_012325872.1">
    <property type="nucleotide sequence ID" value="XM_012470449.2"/>
</dbReference>
<dbReference type="SMR" id="A0A2K5EJU6"/>
<dbReference type="STRING" id="37293.ENSANAP00000033484"/>
<dbReference type="Ensembl" id="ENSANAT00000051542.1">
    <property type="protein sequence ID" value="ENSANAP00000033484.1"/>
    <property type="gene ID" value="ENSANAG00000034411.1"/>
</dbReference>
<dbReference type="Ensembl" id="ENSANAT00000051548.1">
    <property type="protein sequence ID" value="ENSANAP00000033490.1"/>
    <property type="gene ID" value="ENSANAG00000034411.1"/>
</dbReference>
<dbReference type="GeneID" id="105729579"/>
<dbReference type="KEGG" id="anan:105729579"/>
<dbReference type="CTD" id="335"/>
<dbReference type="GeneTree" id="ENSGT00950000182929"/>
<dbReference type="OMA" id="EYVAQFE"/>
<dbReference type="OrthoDB" id="8727817at2759"/>
<dbReference type="Proteomes" id="UP000233020">
    <property type="component" value="Unplaced"/>
</dbReference>
<dbReference type="GO" id="GO:0042627">
    <property type="term" value="C:chylomicron"/>
    <property type="evidence" value="ECO:0007669"/>
    <property type="project" value="TreeGrafter"/>
</dbReference>
<dbReference type="GO" id="GO:0030139">
    <property type="term" value="C:endocytic vesicle"/>
    <property type="evidence" value="ECO:0007669"/>
    <property type="project" value="Ensembl"/>
</dbReference>
<dbReference type="GO" id="GO:1903561">
    <property type="term" value="C:extracellular vesicle"/>
    <property type="evidence" value="ECO:0007669"/>
    <property type="project" value="TreeGrafter"/>
</dbReference>
<dbReference type="GO" id="GO:0034362">
    <property type="term" value="C:low-density lipoprotein particle"/>
    <property type="evidence" value="ECO:0007669"/>
    <property type="project" value="TreeGrafter"/>
</dbReference>
<dbReference type="GO" id="GO:0034366">
    <property type="term" value="C:spherical high-density lipoprotein particle"/>
    <property type="evidence" value="ECO:0007669"/>
    <property type="project" value="Ensembl"/>
</dbReference>
<dbReference type="GO" id="GO:0034361">
    <property type="term" value="C:very-low-density lipoprotein particle"/>
    <property type="evidence" value="ECO:0007669"/>
    <property type="project" value="Ensembl"/>
</dbReference>
<dbReference type="GO" id="GO:0001540">
    <property type="term" value="F:amyloid-beta binding"/>
    <property type="evidence" value="ECO:0007669"/>
    <property type="project" value="Ensembl"/>
</dbReference>
<dbReference type="GO" id="GO:0034191">
    <property type="term" value="F:apolipoprotein A-I receptor binding"/>
    <property type="evidence" value="ECO:0007669"/>
    <property type="project" value="Ensembl"/>
</dbReference>
<dbReference type="GO" id="GO:0045499">
    <property type="term" value="F:chemorepellent activity"/>
    <property type="evidence" value="ECO:0007669"/>
    <property type="project" value="Ensembl"/>
</dbReference>
<dbReference type="GO" id="GO:0015485">
    <property type="term" value="F:cholesterol binding"/>
    <property type="evidence" value="ECO:0007669"/>
    <property type="project" value="Ensembl"/>
</dbReference>
<dbReference type="GO" id="GO:0120020">
    <property type="term" value="F:cholesterol transfer activity"/>
    <property type="evidence" value="ECO:0007669"/>
    <property type="project" value="Ensembl"/>
</dbReference>
<dbReference type="GO" id="GO:0019899">
    <property type="term" value="F:enzyme binding"/>
    <property type="evidence" value="ECO:0007669"/>
    <property type="project" value="Ensembl"/>
</dbReference>
<dbReference type="GO" id="GO:0031072">
    <property type="term" value="F:heat shock protein binding"/>
    <property type="evidence" value="ECO:0007669"/>
    <property type="project" value="Ensembl"/>
</dbReference>
<dbReference type="GO" id="GO:0008035">
    <property type="term" value="F:high-density lipoprotein particle binding"/>
    <property type="evidence" value="ECO:0007669"/>
    <property type="project" value="Ensembl"/>
</dbReference>
<dbReference type="GO" id="GO:0070653">
    <property type="term" value="F:high-density lipoprotein particle receptor binding"/>
    <property type="evidence" value="ECO:0007669"/>
    <property type="project" value="Ensembl"/>
</dbReference>
<dbReference type="GO" id="GO:0060228">
    <property type="term" value="F:phosphatidylcholine-sterol O-acyltransferase activator activity"/>
    <property type="evidence" value="ECO:0007669"/>
    <property type="project" value="Ensembl"/>
</dbReference>
<dbReference type="GO" id="GO:0005543">
    <property type="term" value="F:phospholipid binding"/>
    <property type="evidence" value="ECO:0007669"/>
    <property type="project" value="Ensembl"/>
</dbReference>
<dbReference type="GO" id="GO:0042803">
    <property type="term" value="F:protein homodimerization activity"/>
    <property type="evidence" value="ECO:0000250"/>
    <property type="project" value="UniProtKB"/>
</dbReference>
<dbReference type="GO" id="GO:0030325">
    <property type="term" value="P:adrenal gland development"/>
    <property type="evidence" value="ECO:0007669"/>
    <property type="project" value="Ensembl"/>
</dbReference>
<dbReference type="GO" id="GO:0034205">
    <property type="term" value="P:amyloid-beta formation"/>
    <property type="evidence" value="ECO:0007669"/>
    <property type="project" value="Ensembl"/>
</dbReference>
<dbReference type="GO" id="GO:0043534">
    <property type="term" value="P:blood vessel endothelial cell migration"/>
    <property type="evidence" value="ECO:0007669"/>
    <property type="project" value="Ensembl"/>
</dbReference>
<dbReference type="GO" id="GO:0071402">
    <property type="term" value="P:cellular response to lipoprotein particle stimulus"/>
    <property type="evidence" value="ECO:0007669"/>
    <property type="project" value="Ensembl"/>
</dbReference>
<dbReference type="GO" id="GO:0006695">
    <property type="term" value="P:cholesterol biosynthetic process"/>
    <property type="evidence" value="ECO:0007669"/>
    <property type="project" value="Ensembl"/>
</dbReference>
<dbReference type="GO" id="GO:0033344">
    <property type="term" value="P:cholesterol efflux"/>
    <property type="evidence" value="ECO:0007669"/>
    <property type="project" value="Ensembl"/>
</dbReference>
<dbReference type="GO" id="GO:0042632">
    <property type="term" value="P:cholesterol homeostasis"/>
    <property type="evidence" value="ECO:0007669"/>
    <property type="project" value="Ensembl"/>
</dbReference>
<dbReference type="GO" id="GO:0070508">
    <property type="term" value="P:cholesterol import"/>
    <property type="evidence" value="ECO:0007669"/>
    <property type="project" value="Ensembl"/>
</dbReference>
<dbReference type="GO" id="GO:0001935">
    <property type="term" value="P:endothelial cell proliferation"/>
    <property type="evidence" value="ECO:0007669"/>
    <property type="project" value="Ensembl"/>
</dbReference>
<dbReference type="GO" id="GO:0007186">
    <property type="term" value="P:G protein-coupled receptor signaling pathway"/>
    <property type="evidence" value="ECO:0007669"/>
    <property type="project" value="Ensembl"/>
</dbReference>
<dbReference type="GO" id="GO:0008211">
    <property type="term" value="P:glucocorticoid metabolic process"/>
    <property type="evidence" value="ECO:0007669"/>
    <property type="project" value="Ensembl"/>
</dbReference>
<dbReference type="GO" id="GO:0034380">
    <property type="term" value="P:high-density lipoprotein particle assembly"/>
    <property type="evidence" value="ECO:0007669"/>
    <property type="project" value="Ensembl"/>
</dbReference>
<dbReference type="GO" id="GO:0034375">
    <property type="term" value="P:high-density lipoprotein particle remodeling"/>
    <property type="evidence" value="ECO:0007669"/>
    <property type="project" value="Ensembl"/>
</dbReference>
<dbReference type="GO" id="GO:0007229">
    <property type="term" value="P:integrin-mediated signaling pathway"/>
    <property type="evidence" value="ECO:0007669"/>
    <property type="project" value="Ensembl"/>
</dbReference>
<dbReference type="GO" id="GO:0019915">
    <property type="term" value="P:lipid storage"/>
    <property type="evidence" value="ECO:0007669"/>
    <property type="project" value="Ensembl"/>
</dbReference>
<dbReference type="GO" id="GO:0042158">
    <property type="term" value="P:lipoprotein biosynthetic process"/>
    <property type="evidence" value="ECO:0007669"/>
    <property type="project" value="Ensembl"/>
</dbReference>
<dbReference type="GO" id="GO:0060354">
    <property type="term" value="P:negative regulation of cell adhesion molecule production"/>
    <property type="evidence" value="ECO:0007669"/>
    <property type="project" value="Ensembl"/>
</dbReference>
<dbReference type="GO" id="GO:0002719">
    <property type="term" value="P:negative regulation of cytokine production involved in immune response"/>
    <property type="evidence" value="ECO:0007669"/>
    <property type="project" value="Ensembl"/>
</dbReference>
<dbReference type="GO" id="GO:0034115">
    <property type="term" value="P:negative regulation of heterotypic cell-cell adhesion"/>
    <property type="evidence" value="ECO:0007669"/>
    <property type="project" value="Ensembl"/>
</dbReference>
<dbReference type="GO" id="GO:0050728">
    <property type="term" value="P:negative regulation of inflammatory response"/>
    <property type="evidence" value="ECO:0007669"/>
    <property type="project" value="Ensembl"/>
</dbReference>
<dbReference type="GO" id="GO:0032691">
    <property type="term" value="P:negative regulation of interleukin-1 beta production"/>
    <property type="evidence" value="ECO:0007669"/>
    <property type="project" value="Ensembl"/>
</dbReference>
<dbReference type="GO" id="GO:0010804">
    <property type="term" value="P:negative regulation of tumor necrosis factor-mediated signaling pathway"/>
    <property type="evidence" value="ECO:0007669"/>
    <property type="project" value="Ensembl"/>
</dbReference>
<dbReference type="GO" id="GO:0010903">
    <property type="term" value="P:negative regulation of very-low-density lipoprotein particle remodeling"/>
    <property type="evidence" value="ECO:0007669"/>
    <property type="project" value="Ensembl"/>
</dbReference>
<dbReference type="GO" id="GO:0006656">
    <property type="term" value="P:phosphatidylcholine biosynthetic process"/>
    <property type="evidence" value="ECO:0007669"/>
    <property type="project" value="Ensembl"/>
</dbReference>
<dbReference type="GO" id="GO:0033700">
    <property type="term" value="P:phospholipid efflux"/>
    <property type="evidence" value="ECO:0007669"/>
    <property type="project" value="Ensembl"/>
</dbReference>
<dbReference type="GO" id="GO:0055091">
    <property type="term" value="P:phospholipid homeostasis"/>
    <property type="evidence" value="ECO:0007669"/>
    <property type="project" value="Ensembl"/>
</dbReference>
<dbReference type="GO" id="GO:0010875">
    <property type="term" value="P:positive regulation of cholesterol efflux"/>
    <property type="evidence" value="ECO:0007669"/>
    <property type="project" value="Ensembl"/>
</dbReference>
<dbReference type="GO" id="GO:0090205">
    <property type="term" value="P:positive regulation of cholesterol metabolic process"/>
    <property type="evidence" value="ECO:0007669"/>
    <property type="project" value="Ensembl"/>
</dbReference>
<dbReference type="GO" id="GO:0050766">
    <property type="term" value="P:positive regulation of phagocytosis"/>
    <property type="evidence" value="ECO:0007669"/>
    <property type="project" value="Ensembl"/>
</dbReference>
<dbReference type="GO" id="GO:1902995">
    <property type="term" value="P:positive regulation of phospholipid efflux"/>
    <property type="evidence" value="ECO:0007669"/>
    <property type="project" value="Ensembl"/>
</dbReference>
<dbReference type="GO" id="GO:0035025">
    <property type="term" value="P:positive regulation of Rho protein signal transduction"/>
    <property type="evidence" value="ECO:0007669"/>
    <property type="project" value="Ensembl"/>
</dbReference>
<dbReference type="GO" id="GO:0051496">
    <property type="term" value="P:positive regulation of stress fiber assembly"/>
    <property type="evidence" value="ECO:0007669"/>
    <property type="project" value="Ensembl"/>
</dbReference>
<dbReference type="GO" id="GO:1900026">
    <property type="term" value="P:positive regulation of substrate adhesion-dependent cell spreading"/>
    <property type="evidence" value="ECO:0007669"/>
    <property type="project" value="Ensembl"/>
</dbReference>
<dbReference type="GO" id="GO:0050821">
    <property type="term" value="P:protein stabilization"/>
    <property type="evidence" value="ECO:0007669"/>
    <property type="project" value="Ensembl"/>
</dbReference>
<dbReference type="GO" id="GO:0032489">
    <property type="term" value="P:regulation of Cdc42 protein signal transduction"/>
    <property type="evidence" value="ECO:0007669"/>
    <property type="project" value="Ensembl"/>
</dbReference>
<dbReference type="GO" id="GO:0030300">
    <property type="term" value="P:regulation of intestinal cholesterol absorption"/>
    <property type="evidence" value="ECO:0007669"/>
    <property type="project" value="Ensembl"/>
</dbReference>
<dbReference type="GO" id="GO:0043691">
    <property type="term" value="P:reverse cholesterol transport"/>
    <property type="evidence" value="ECO:0007669"/>
    <property type="project" value="Ensembl"/>
</dbReference>
<dbReference type="GO" id="GO:0070328">
    <property type="term" value="P:triglyceride homeostasis"/>
    <property type="evidence" value="ECO:0007669"/>
    <property type="project" value="Ensembl"/>
</dbReference>
<dbReference type="GO" id="GO:0051180">
    <property type="term" value="P:vitamin transport"/>
    <property type="evidence" value="ECO:0007669"/>
    <property type="project" value="Ensembl"/>
</dbReference>
<dbReference type="FunFam" id="1.20.120.20:FF:000001">
    <property type="entry name" value="Apolipoprotein A-I"/>
    <property type="match status" value="1"/>
</dbReference>
<dbReference type="FunFam" id="1.20.5.20:FF:000001">
    <property type="entry name" value="apolipoprotein A-I"/>
    <property type="match status" value="1"/>
</dbReference>
<dbReference type="Gene3D" id="1.20.5.20">
    <property type="match status" value="1"/>
</dbReference>
<dbReference type="Gene3D" id="6.10.140.380">
    <property type="match status" value="1"/>
</dbReference>
<dbReference type="Gene3D" id="1.20.120.20">
    <property type="entry name" value="Apolipoprotein"/>
    <property type="match status" value="1"/>
</dbReference>
<dbReference type="InterPro" id="IPR000074">
    <property type="entry name" value="ApoA_E"/>
</dbReference>
<dbReference type="InterPro" id="IPR050163">
    <property type="entry name" value="Apolipoprotein_A1/A4/E"/>
</dbReference>
<dbReference type="PANTHER" id="PTHR18976">
    <property type="entry name" value="APOLIPOPROTEIN"/>
    <property type="match status" value="1"/>
</dbReference>
<dbReference type="PANTHER" id="PTHR18976:SF11">
    <property type="entry name" value="APOLIPOPROTEIN A-I"/>
    <property type="match status" value="1"/>
</dbReference>
<dbReference type="Pfam" id="PF01442">
    <property type="entry name" value="Apolipoprotein"/>
    <property type="match status" value="1"/>
</dbReference>
<dbReference type="SUPFAM" id="SSF58113">
    <property type="entry name" value="Apolipoprotein A-I"/>
    <property type="match status" value="1"/>
</dbReference>
<organism>
    <name type="scientific">Aotus nancymaae</name>
    <name type="common">Ma's night monkey</name>
    <dbReference type="NCBI Taxonomy" id="37293"/>
    <lineage>
        <taxon>Eukaryota</taxon>
        <taxon>Metazoa</taxon>
        <taxon>Chordata</taxon>
        <taxon>Craniata</taxon>
        <taxon>Vertebrata</taxon>
        <taxon>Euteleostomi</taxon>
        <taxon>Mammalia</taxon>
        <taxon>Eutheria</taxon>
        <taxon>Euarchontoglires</taxon>
        <taxon>Primates</taxon>
        <taxon>Haplorrhini</taxon>
        <taxon>Platyrrhini</taxon>
        <taxon>Aotidae</taxon>
        <taxon>Aotus</taxon>
    </lineage>
</organism>
<name>APOA1_AOTNA</name>
<keyword id="KW-0153">Cholesterol metabolism</keyword>
<keyword id="KW-0345">HDL</keyword>
<keyword id="KW-0443">Lipid metabolism</keyword>
<keyword id="KW-0445">Lipid transport</keyword>
<keyword id="KW-0449">Lipoprotein</keyword>
<keyword id="KW-0558">Oxidation</keyword>
<keyword id="KW-0564">Palmitate</keyword>
<keyword id="KW-0597">Phosphoprotein</keyword>
<keyword id="KW-1185">Reference proteome</keyword>
<keyword id="KW-0677">Repeat</keyword>
<keyword id="KW-0964">Secreted</keyword>
<keyword id="KW-0732">Signal</keyword>
<keyword id="KW-0753">Steroid metabolism</keyword>
<keyword id="KW-1207">Sterol metabolism</keyword>
<keyword id="KW-0813">Transport</keyword>
<reference key="1">
    <citation type="submission" date="2015-02" db="EMBL/GenBank/DDBJ databases">
        <title>Owl monkey reference genome and diversity panel.</title>
        <authorList>
            <person name="Hughes D.S."/>
            <person name="Murali S."/>
            <person name="Raveendran M."/>
            <person name="Korchina V."/>
            <person name="Bandaranaike D."/>
            <person name="Bellair M."/>
            <person name="Blankenburg K."/>
            <person name="Chao H."/>
            <person name="Dahdouli M."/>
            <person name="Dinh H."/>
            <person name="Doddapaneni H."/>
            <person name="Jayaseelan J."/>
            <person name="Khan Z."/>
            <person name="Kovar C."/>
            <person name="Kurapati P."/>
            <person name="Le B."/>
            <person name="Lee S."/>
            <person name="Lorensuhewa L."/>
            <person name="Mathew T."/>
            <person name="Narasimhan A."/>
            <person name="Okwuonu G."/>
            <person name="Osuji N."/>
            <person name="Otenyo P."/>
            <person name="Qu C."/>
            <person name="Quiroz J."/>
            <person name="Raj R."/>
            <person name="Rajbhandari K."/>
            <person name="Santibanez J."/>
            <person name="Skinner E."/>
            <person name="Wang Y."/>
            <person name="Xin Y."/>
            <person name="Han Y."/>
            <person name="Muzny D.M."/>
            <person name="Richards S."/>
            <person name="Worley K.C."/>
            <person name="Rogers J."/>
            <person name="Gibbs R.A."/>
        </authorList>
    </citation>
    <scope>NUCLEOTIDE SEQUENCE [LARGE SCALE GENOMIC DNA]</scope>
</reference>
<reference key="2">
    <citation type="unpublished observations" date="2020-10">
        <authorList>
            <person name="Puppione D.L."/>
        </authorList>
    </citation>
    <scope>IDENTIFICATION</scope>
</reference>
<sequence>MKAAVLIWLFLMGSQARHFWQQDEPPQSPWDRVKDLATVYVDSVKDSGRDYVSQFETSTLGKQLNLKLLDNWDSLTSTVNKLREQLGPVTQEFWDNLEKETEELRQEMSKDLEEVKAQVQPYLDNFQKNWQEEMNLYSQKLEPLRTELQEGALQKLQDLQEKLSPLAEQVRDRARAHVNTLRTQLAPYSDELRQRLATRLEALKENSGASLAEYHAKASEHLSALGEKAKPALDDLRQGLLPVLESFKVSFLSALEEYTKKLSSQ</sequence>
<proteinExistence type="inferred from homology"/>
<feature type="signal peptide" evidence="6">
    <location>
        <begin position="1"/>
        <end position="16"/>
    </location>
</feature>
<feature type="chain" id="PRO_5014561356" description="Apolipoprotein A-I">
    <location>
        <begin position="17"/>
        <end position="265"/>
    </location>
</feature>
<feature type="chain" id="PRO_0000451965" description="Proapolipoprotein A-I">
    <location>
        <begin position="23"/>
        <end position="265"/>
    </location>
</feature>
<feature type="chain" id="PRO_0000451966" description="Truncated apolipoprotein A-I" evidence="3">
    <location>
        <begin position="23"/>
        <end position="264"/>
    </location>
</feature>
<feature type="repeat" description="1">
    <location>
        <begin position="66"/>
        <end position="87"/>
    </location>
</feature>
<feature type="repeat" description="2">
    <location>
        <begin position="88"/>
        <end position="109"/>
    </location>
</feature>
<feature type="repeat" description="3; half-length">
    <location>
        <begin position="110"/>
        <end position="120"/>
    </location>
</feature>
<feature type="repeat" description="4">
    <location>
        <begin position="121"/>
        <end position="142"/>
    </location>
</feature>
<feature type="repeat" description="5">
    <location>
        <begin position="143"/>
        <end position="164"/>
    </location>
</feature>
<feature type="repeat" description="6">
    <location>
        <begin position="165"/>
        <end position="186"/>
    </location>
</feature>
<feature type="repeat" description="7">
    <location>
        <begin position="187"/>
        <end position="208"/>
    </location>
</feature>
<feature type="repeat" description="8">
    <location>
        <begin position="209"/>
        <end position="230"/>
    </location>
</feature>
<feature type="repeat" description="9; half-length">
    <location>
        <begin position="231"/>
        <end position="241"/>
    </location>
</feature>
<feature type="repeat" description="10">
    <location>
        <begin position="242"/>
        <end position="265"/>
    </location>
</feature>
<feature type="region of interest" description="10 X approximate tandem repeats">
    <location>
        <begin position="66"/>
        <end position="265"/>
    </location>
</feature>
<feature type="modified residue" description="Methionine sulfoxide" evidence="3">
    <location>
        <position position="108"/>
    </location>
</feature>
<feature type="modified residue" description="Methionine sulfoxide" evidence="3">
    <location>
        <position position="134"/>
    </location>
</feature>
<protein>
    <recommendedName>
        <fullName>Apolipoprotein A-I</fullName>
        <shortName>Apo-AI</shortName>
        <shortName>ApoA-I</shortName>
    </recommendedName>
    <alternativeName>
        <fullName>Apolipoprotein A1</fullName>
    </alternativeName>
    <component>
        <recommendedName>
            <fullName>Proapolipoprotein A-I</fullName>
            <shortName>ProapoA-I</shortName>
        </recommendedName>
    </component>
    <component>
        <recommendedName>
            <fullName>Truncated apolipoprotein A-I</fullName>
        </recommendedName>
    </component>
</protein>